<reference key="1">
    <citation type="journal article" date="2007" name="Science">
        <title>The Fusarium graminearum genome reveals a link between localized polymorphism and pathogen specialization.</title>
        <authorList>
            <person name="Cuomo C.A."/>
            <person name="Gueldener U."/>
            <person name="Xu J.-R."/>
            <person name="Trail F."/>
            <person name="Turgeon B.G."/>
            <person name="Di Pietro A."/>
            <person name="Walton J.D."/>
            <person name="Ma L.-J."/>
            <person name="Baker S.E."/>
            <person name="Rep M."/>
            <person name="Adam G."/>
            <person name="Antoniw J."/>
            <person name="Baldwin T."/>
            <person name="Calvo S.E."/>
            <person name="Chang Y.-L."/>
            <person name="DeCaprio D."/>
            <person name="Gale L.R."/>
            <person name="Gnerre S."/>
            <person name="Goswami R.S."/>
            <person name="Hammond-Kosack K."/>
            <person name="Harris L.J."/>
            <person name="Hilburn K."/>
            <person name="Kennell J.C."/>
            <person name="Kroken S."/>
            <person name="Magnuson J.K."/>
            <person name="Mannhaupt G."/>
            <person name="Mauceli E.W."/>
            <person name="Mewes H.-W."/>
            <person name="Mitterbauer R."/>
            <person name="Muehlbauer G."/>
            <person name="Muensterkoetter M."/>
            <person name="Nelson D."/>
            <person name="O'Donnell K."/>
            <person name="Ouellet T."/>
            <person name="Qi W."/>
            <person name="Quesneville H."/>
            <person name="Roncero M.I.G."/>
            <person name="Seong K.-Y."/>
            <person name="Tetko I.V."/>
            <person name="Urban M."/>
            <person name="Waalwijk C."/>
            <person name="Ward T.J."/>
            <person name="Yao J."/>
            <person name="Birren B.W."/>
            <person name="Kistler H.C."/>
        </authorList>
    </citation>
    <scope>NUCLEOTIDE SEQUENCE [LARGE SCALE GENOMIC DNA]</scope>
    <source>
        <strain>ATCC MYA-4620 / CBS 123657 / FGSC 9075 / NRRL 31084 / PH-1</strain>
    </source>
</reference>
<reference key="2">
    <citation type="journal article" date="2010" name="Nature">
        <title>Comparative genomics reveals mobile pathogenicity chromosomes in Fusarium.</title>
        <authorList>
            <person name="Ma L.-J."/>
            <person name="van der Does H.C."/>
            <person name="Borkovich K.A."/>
            <person name="Coleman J.J."/>
            <person name="Daboussi M.-J."/>
            <person name="Di Pietro A."/>
            <person name="Dufresne M."/>
            <person name="Freitag M."/>
            <person name="Grabherr M."/>
            <person name="Henrissat B."/>
            <person name="Houterman P.M."/>
            <person name="Kang S."/>
            <person name="Shim W.-B."/>
            <person name="Woloshuk C."/>
            <person name="Xie X."/>
            <person name="Xu J.-R."/>
            <person name="Antoniw J."/>
            <person name="Baker S.E."/>
            <person name="Bluhm B.H."/>
            <person name="Breakspear A."/>
            <person name="Brown D.W."/>
            <person name="Butchko R.A.E."/>
            <person name="Chapman S."/>
            <person name="Coulson R."/>
            <person name="Coutinho P.M."/>
            <person name="Danchin E.G.J."/>
            <person name="Diener A."/>
            <person name="Gale L.R."/>
            <person name="Gardiner D.M."/>
            <person name="Goff S."/>
            <person name="Hammond-Kosack K.E."/>
            <person name="Hilburn K."/>
            <person name="Hua-Van A."/>
            <person name="Jonkers W."/>
            <person name="Kazan K."/>
            <person name="Kodira C.D."/>
            <person name="Koehrsen M."/>
            <person name="Kumar L."/>
            <person name="Lee Y.-H."/>
            <person name="Li L."/>
            <person name="Manners J.M."/>
            <person name="Miranda-Saavedra D."/>
            <person name="Mukherjee M."/>
            <person name="Park G."/>
            <person name="Park J."/>
            <person name="Park S.-Y."/>
            <person name="Proctor R.H."/>
            <person name="Regev A."/>
            <person name="Ruiz-Roldan M.C."/>
            <person name="Sain D."/>
            <person name="Sakthikumar S."/>
            <person name="Sykes S."/>
            <person name="Schwartz D.C."/>
            <person name="Turgeon B.G."/>
            <person name="Wapinski I."/>
            <person name="Yoder O."/>
            <person name="Young S."/>
            <person name="Zeng Q."/>
            <person name="Zhou S."/>
            <person name="Galagan J."/>
            <person name="Cuomo C.A."/>
            <person name="Kistler H.C."/>
            <person name="Rep M."/>
        </authorList>
    </citation>
    <scope>GENOME REANNOTATION</scope>
    <source>
        <strain>ATCC MYA-4620 / CBS 123657 / FGSC 9075 / NRRL 31084 / PH-1</strain>
    </source>
</reference>
<reference key="3">
    <citation type="journal article" date="2015" name="BMC Genomics">
        <title>The completed genome sequence of the pathogenic ascomycete fungus Fusarium graminearum.</title>
        <authorList>
            <person name="King R."/>
            <person name="Urban M."/>
            <person name="Hammond-Kosack M.C.U."/>
            <person name="Hassani-Pak K."/>
            <person name="Hammond-Kosack K.E."/>
        </authorList>
    </citation>
    <scope>NUCLEOTIDE SEQUENCE [LARGE SCALE GENOMIC DNA]</scope>
    <source>
        <strain>ATCC MYA-4620 / CBS 123657 / FGSC 9075 / NRRL 31084 / PH-1</strain>
    </source>
</reference>
<feature type="chain" id="PRO_0000232190" description="ATP-dependent RNA helicase DHH1">
    <location>
        <begin position="1"/>
        <end position="522"/>
    </location>
</feature>
<feature type="domain" description="Helicase ATP-binding" evidence="2">
    <location>
        <begin position="80"/>
        <end position="250"/>
    </location>
</feature>
<feature type="domain" description="Helicase C-terminal" evidence="3">
    <location>
        <begin position="260"/>
        <end position="420"/>
    </location>
</feature>
<feature type="region of interest" description="Disordered" evidence="5">
    <location>
        <begin position="1"/>
        <end position="44"/>
    </location>
</feature>
<feature type="region of interest" description="Disordered" evidence="5">
    <location>
        <begin position="431"/>
        <end position="522"/>
    </location>
</feature>
<feature type="short sequence motif" description="Q motif" evidence="4">
    <location>
        <begin position="49"/>
        <end position="77"/>
    </location>
</feature>
<feature type="short sequence motif" description="DEAD box" evidence="2">
    <location>
        <begin position="198"/>
        <end position="201"/>
    </location>
</feature>
<feature type="compositionally biased region" description="Basic and acidic residues" evidence="5">
    <location>
        <begin position="1"/>
        <end position="10"/>
    </location>
</feature>
<feature type="compositionally biased region" description="Low complexity" evidence="5">
    <location>
        <begin position="439"/>
        <end position="473"/>
    </location>
</feature>
<feature type="compositionally biased region" description="Gly residues" evidence="5">
    <location>
        <begin position="503"/>
        <end position="514"/>
    </location>
</feature>
<feature type="binding site" evidence="2">
    <location>
        <begin position="93"/>
        <end position="100"/>
    </location>
    <ligand>
        <name>ATP</name>
        <dbReference type="ChEBI" id="CHEBI:30616"/>
    </ligand>
</feature>
<protein>
    <recommendedName>
        <fullName>ATP-dependent RNA helicase DHH1</fullName>
        <ecNumber>3.6.4.13</ecNumber>
    </recommendedName>
</protein>
<gene>
    <name type="primary">DHH1</name>
    <name type="ORF">FGRAMPH1_01T20477</name>
    <name type="ORF">FGRRES_10791</name>
    <name type="ORF">FGSG_10791</name>
</gene>
<evidence type="ECO:0000250" key="1"/>
<evidence type="ECO:0000255" key="2">
    <source>
        <dbReference type="PROSITE-ProRule" id="PRU00541"/>
    </source>
</evidence>
<evidence type="ECO:0000255" key="3">
    <source>
        <dbReference type="PROSITE-ProRule" id="PRU00542"/>
    </source>
</evidence>
<evidence type="ECO:0000255" key="4">
    <source>
        <dbReference type="PROSITE-ProRule" id="PRU00552"/>
    </source>
</evidence>
<evidence type="ECO:0000256" key="5">
    <source>
        <dbReference type="SAM" id="MobiDB-lite"/>
    </source>
</evidence>
<evidence type="ECO:0000305" key="6"/>
<comment type="function">
    <text evidence="1">ATP-dependent RNA helicase involved in mRNA turnover, and more specifically in mRNA decapping. Is involved in G1/S DNA-damage checkpoint recovery, probably through the regulation of the translational status of a subset of mRNAs. May also have a role in translation and mRNA nuclear export (By similarity).</text>
</comment>
<comment type="catalytic activity">
    <reaction>
        <text>ATP + H2O = ADP + phosphate + H(+)</text>
        <dbReference type="Rhea" id="RHEA:13065"/>
        <dbReference type="ChEBI" id="CHEBI:15377"/>
        <dbReference type="ChEBI" id="CHEBI:15378"/>
        <dbReference type="ChEBI" id="CHEBI:30616"/>
        <dbReference type="ChEBI" id="CHEBI:43474"/>
        <dbReference type="ChEBI" id="CHEBI:456216"/>
        <dbReference type="EC" id="3.6.4.13"/>
    </reaction>
</comment>
<comment type="subcellular location">
    <subcellularLocation>
        <location evidence="1">Cytoplasm</location>
        <location evidence="1">P-body</location>
    </subcellularLocation>
    <text evidence="1">Is concentrated in several cytoplasmic foci called P bodies (or cytoplasmic processing bodies) which represent sites of mRNA decapping and 5' to 3' exonucleotidic decay.</text>
</comment>
<comment type="domain">
    <text>The Q motif is unique to and characteristic of the DEAD box family of RNA helicases and controls ATP binding and hydrolysis.</text>
</comment>
<comment type="similarity">
    <text evidence="6">Belongs to the DEAD box helicase family. DDX6/DHH1 subfamily.</text>
</comment>
<sequence length="522" mass="58371">MADQLADKLKSTQLSDGSPGASDEWKKNLNLPAKDNRQQTEDVTNTKGLEFENFALKRDLLMGIFEAGFEKPSPIQEESIPVALTGRDILARAKNGTGKTAAFVIPTLERINPKISKIQCLILVPTRELAMQTSQVCKTLGKHLGINVMVTTGGTGLRDDIIRLQDPVHIVVGTPGRILDLAGKNVADLSECPMFIMDEADKLLSIEFTPVIEQLLQFHPKDRQVMLFSATFPLSVKDFSDKNMVSPYEINLMDELTLRGITQYYAFVEEKQKVHCLNTLFSKLQINQSIIFCNSTNRVELLAKKITELGYSCFYSHAKMQQHARNRVFHDFRNGVCRNLVCSDLLTRGIDIQAVNVVINFDFPKNAETYLHRIGRSGRYGHLGLAINLINWDDRFNLYNIERDLGTEIQPIPASIDKSLYVYENPESIPRPISNLPRGQLPAAQGQQSPQQQQQYQQPQQTQQAGLPQQGQGNWQSQNPQHGNPHYNNGGRGRGGRGRGYRGRGGQGQGGRGRGPPRDVQP</sequence>
<organism>
    <name type="scientific">Gibberella zeae (strain ATCC MYA-4620 / CBS 123657 / FGSC 9075 / NRRL 31084 / PH-1)</name>
    <name type="common">Wheat head blight fungus</name>
    <name type="synonym">Fusarium graminearum</name>
    <dbReference type="NCBI Taxonomy" id="229533"/>
    <lineage>
        <taxon>Eukaryota</taxon>
        <taxon>Fungi</taxon>
        <taxon>Dikarya</taxon>
        <taxon>Ascomycota</taxon>
        <taxon>Pezizomycotina</taxon>
        <taxon>Sordariomycetes</taxon>
        <taxon>Hypocreomycetidae</taxon>
        <taxon>Hypocreales</taxon>
        <taxon>Nectriaceae</taxon>
        <taxon>Fusarium</taxon>
    </lineage>
</organism>
<proteinExistence type="inferred from homology"/>
<keyword id="KW-0067">ATP-binding</keyword>
<keyword id="KW-0963">Cytoplasm</keyword>
<keyword id="KW-0347">Helicase</keyword>
<keyword id="KW-0378">Hydrolase</keyword>
<keyword id="KW-0507">mRNA processing</keyword>
<keyword id="KW-0509">mRNA transport</keyword>
<keyword id="KW-0547">Nucleotide-binding</keyword>
<keyword id="KW-1185">Reference proteome</keyword>
<keyword id="KW-0694">RNA-binding</keyword>
<keyword id="KW-0810">Translation regulation</keyword>
<keyword id="KW-0813">Transport</keyword>
<name>DHH1_GIBZE</name>
<dbReference type="EC" id="3.6.4.13"/>
<dbReference type="EMBL" id="DS231670">
    <property type="protein sequence ID" value="ESU17989.1"/>
    <property type="molecule type" value="Genomic_DNA"/>
</dbReference>
<dbReference type="EMBL" id="HG970334">
    <property type="protein sequence ID" value="SCB64948.1"/>
    <property type="molecule type" value="Genomic_DNA"/>
</dbReference>
<dbReference type="RefSeq" id="XP_011325611.1">
    <property type="nucleotide sequence ID" value="XM_011327309.1"/>
</dbReference>
<dbReference type="SMR" id="Q4HW67"/>
<dbReference type="FunCoup" id="Q4HW67">
    <property type="interactions" value="1345"/>
</dbReference>
<dbReference type="STRING" id="229533.Q4HW67"/>
<dbReference type="GeneID" id="23557675"/>
<dbReference type="KEGG" id="fgr:FGSG_10791"/>
<dbReference type="VEuPathDB" id="FungiDB:FGRAMPH1_01G20477"/>
<dbReference type="eggNOG" id="KOG0326">
    <property type="taxonomic scope" value="Eukaryota"/>
</dbReference>
<dbReference type="HOGENOM" id="CLU_003041_30_1_1"/>
<dbReference type="InParanoid" id="Q4HW67"/>
<dbReference type="OrthoDB" id="93167at110618"/>
<dbReference type="Proteomes" id="UP000070720">
    <property type="component" value="Chromosome 3"/>
</dbReference>
<dbReference type="GO" id="GO:0000932">
    <property type="term" value="C:P-body"/>
    <property type="evidence" value="ECO:0007669"/>
    <property type="project" value="UniProtKB-SubCell"/>
</dbReference>
<dbReference type="GO" id="GO:0005524">
    <property type="term" value="F:ATP binding"/>
    <property type="evidence" value="ECO:0007669"/>
    <property type="project" value="UniProtKB-KW"/>
</dbReference>
<dbReference type="GO" id="GO:0016887">
    <property type="term" value="F:ATP hydrolysis activity"/>
    <property type="evidence" value="ECO:0007669"/>
    <property type="project" value="RHEA"/>
</dbReference>
<dbReference type="GO" id="GO:0003723">
    <property type="term" value="F:RNA binding"/>
    <property type="evidence" value="ECO:0007669"/>
    <property type="project" value="UniProtKB-KW"/>
</dbReference>
<dbReference type="GO" id="GO:0003724">
    <property type="term" value="F:RNA helicase activity"/>
    <property type="evidence" value="ECO:0007669"/>
    <property type="project" value="UniProtKB-EC"/>
</dbReference>
<dbReference type="GO" id="GO:0006397">
    <property type="term" value="P:mRNA processing"/>
    <property type="evidence" value="ECO:0007669"/>
    <property type="project" value="UniProtKB-KW"/>
</dbReference>
<dbReference type="GO" id="GO:0051028">
    <property type="term" value="P:mRNA transport"/>
    <property type="evidence" value="ECO:0007669"/>
    <property type="project" value="UniProtKB-KW"/>
</dbReference>
<dbReference type="GO" id="GO:0006417">
    <property type="term" value="P:regulation of translation"/>
    <property type="evidence" value="ECO:0007669"/>
    <property type="project" value="UniProtKB-KW"/>
</dbReference>
<dbReference type="CDD" id="cd17940">
    <property type="entry name" value="DEADc_DDX6"/>
    <property type="match status" value="1"/>
</dbReference>
<dbReference type="CDD" id="cd18787">
    <property type="entry name" value="SF2_C_DEAD"/>
    <property type="match status" value="1"/>
</dbReference>
<dbReference type="FunFam" id="3.40.50.300:FF:000114">
    <property type="entry name" value="ATP-dependent RNA helicase DDX6"/>
    <property type="match status" value="1"/>
</dbReference>
<dbReference type="FunFam" id="3.40.50.300:FF:000364">
    <property type="entry name" value="ATP-dependent RNA helicase DDX6"/>
    <property type="match status" value="1"/>
</dbReference>
<dbReference type="Gene3D" id="3.40.50.300">
    <property type="entry name" value="P-loop containing nucleotide triphosphate hydrolases"/>
    <property type="match status" value="2"/>
</dbReference>
<dbReference type="InterPro" id="IPR011545">
    <property type="entry name" value="DEAD/DEAH_box_helicase_dom"/>
</dbReference>
<dbReference type="InterPro" id="IPR014001">
    <property type="entry name" value="Helicase_ATP-bd"/>
</dbReference>
<dbReference type="InterPro" id="IPR001650">
    <property type="entry name" value="Helicase_C-like"/>
</dbReference>
<dbReference type="InterPro" id="IPR027417">
    <property type="entry name" value="P-loop_NTPase"/>
</dbReference>
<dbReference type="InterPro" id="IPR000629">
    <property type="entry name" value="RNA-helicase_DEAD-box_CS"/>
</dbReference>
<dbReference type="InterPro" id="IPR014014">
    <property type="entry name" value="RNA_helicase_DEAD_Q_motif"/>
</dbReference>
<dbReference type="PANTHER" id="PTHR47960">
    <property type="entry name" value="DEAD-BOX ATP-DEPENDENT RNA HELICASE 50"/>
    <property type="match status" value="1"/>
</dbReference>
<dbReference type="Pfam" id="PF00270">
    <property type="entry name" value="DEAD"/>
    <property type="match status" value="1"/>
</dbReference>
<dbReference type="Pfam" id="PF00271">
    <property type="entry name" value="Helicase_C"/>
    <property type="match status" value="1"/>
</dbReference>
<dbReference type="SMART" id="SM00487">
    <property type="entry name" value="DEXDc"/>
    <property type="match status" value="1"/>
</dbReference>
<dbReference type="SMART" id="SM00490">
    <property type="entry name" value="HELICc"/>
    <property type="match status" value="1"/>
</dbReference>
<dbReference type="SUPFAM" id="SSF52540">
    <property type="entry name" value="P-loop containing nucleoside triphosphate hydrolases"/>
    <property type="match status" value="1"/>
</dbReference>
<dbReference type="PROSITE" id="PS00039">
    <property type="entry name" value="DEAD_ATP_HELICASE"/>
    <property type="match status" value="1"/>
</dbReference>
<dbReference type="PROSITE" id="PS51192">
    <property type="entry name" value="HELICASE_ATP_BIND_1"/>
    <property type="match status" value="1"/>
</dbReference>
<dbReference type="PROSITE" id="PS51194">
    <property type="entry name" value="HELICASE_CTER"/>
    <property type="match status" value="1"/>
</dbReference>
<dbReference type="PROSITE" id="PS51195">
    <property type="entry name" value="Q_MOTIF"/>
    <property type="match status" value="1"/>
</dbReference>
<accession>Q4HW67</accession>
<accession>A0A098DXQ9</accession>
<accession>A0A0E0SI76</accession>
<accession>A0A1C3YKL4</accession>
<accession>V6RUY7</accession>